<accession>Q0TM14</accession>
<evidence type="ECO:0000255" key="1">
    <source>
        <dbReference type="HAMAP-Rule" id="MF_00503"/>
    </source>
</evidence>
<evidence type="ECO:0000305" key="2"/>
<protein>
    <recommendedName>
        <fullName evidence="1">Large ribosomal subunit protein bL9</fullName>
    </recommendedName>
    <alternativeName>
        <fullName evidence="2">50S ribosomal protein L9</fullName>
    </alternativeName>
</protein>
<comment type="function">
    <text evidence="1">Binds to the 23S rRNA.</text>
</comment>
<comment type="similarity">
    <text evidence="1">Belongs to the bacterial ribosomal protein bL9 family.</text>
</comment>
<gene>
    <name evidence="1" type="primary">rplI</name>
    <name type="ordered locus">CPF_2972</name>
</gene>
<reference key="1">
    <citation type="journal article" date="2006" name="Genome Res.">
        <title>Skewed genomic variability in strains of the toxigenic bacterial pathogen, Clostridium perfringens.</title>
        <authorList>
            <person name="Myers G.S.A."/>
            <person name="Rasko D.A."/>
            <person name="Cheung J.K."/>
            <person name="Ravel J."/>
            <person name="Seshadri R."/>
            <person name="DeBoy R.T."/>
            <person name="Ren Q."/>
            <person name="Varga J."/>
            <person name="Awad M.M."/>
            <person name="Brinkac L.M."/>
            <person name="Daugherty S.C."/>
            <person name="Haft D.H."/>
            <person name="Dodson R.J."/>
            <person name="Madupu R."/>
            <person name="Nelson W.C."/>
            <person name="Rosovitz M.J."/>
            <person name="Sullivan S.A."/>
            <person name="Khouri H."/>
            <person name="Dimitrov G.I."/>
            <person name="Watkins K.L."/>
            <person name="Mulligan S."/>
            <person name="Benton J."/>
            <person name="Radune D."/>
            <person name="Fisher D.J."/>
            <person name="Atkins H.S."/>
            <person name="Hiscox T."/>
            <person name="Jost B.H."/>
            <person name="Billington S.J."/>
            <person name="Songer J.G."/>
            <person name="McClane B.A."/>
            <person name="Titball R.W."/>
            <person name="Rood J.I."/>
            <person name="Melville S.B."/>
            <person name="Paulsen I.T."/>
        </authorList>
    </citation>
    <scope>NUCLEOTIDE SEQUENCE [LARGE SCALE GENOMIC DNA]</scope>
    <source>
        <strain>ATCC 13124 / DSM 756 / JCM 1290 / NCIMB 6125 / NCTC 8237 / S 107 / Type A</strain>
    </source>
</reference>
<keyword id="KW-0687">Ribonucleoprotein</keyword>
<keyword id="KW-0689">Ribosomal protein</keyword>
<keyword id="KW-0694">RNA-binding</keyword>
<keyword id="KW-0699">rRNA-binding</keyword>
<name>RL9_CLOP1</name>
<proteinExistence type="inferred from homology"/>
<dbReference type="EMBL" id="CP000246">
    <property type="protein sequence ID" value="ABG84414.1"/>
    <property type="molecule type" value="Genomic_DNA"/>
</dbReference>
<dbReference type="RefSeq" id="WP_003451030.1">
    <property type="nucleotide sequence ID" value="NC_008261.1"/>
</dbReference>
<dbReference type="SMR" id="Q0TM14"/>
<dbReference type="STRING" id="195103.CPF_2972"/>
<dbReference type="PaxDb" id="195103-CPF_2972"/>
<dbReference type="GeneID" id="93000749"/>
<dbReference type="KEGG" id="cpf:CPF_2972"/>
<dbReference type="eggNOG" id="COG0359">
    <property type="taxonomic scope" value="Bacteria"/>
</dbReference>
<dbReference type="HOGENOM" id="CLU_078938_3_0_9"/>
<dbReference type="Proteomes" id="UP000001823">
    <property type="component" value="Chromosome"/>
</dbReference>
<dbReference type="GO" id="GO:1990904">
    <property type="term" value="C:ribonucleoprotein complex"/>
    <property type="evidence" value="ECO:0007669"/>
    <property type="project" value="UniProtKB-KW"/>
</dbReference>
<dbReference type="GO" id="GO:0005840">
    <property type="term" value="C:ribosome"/>
    <property type="evidence" value="ECO:0007669"/>
    <property type="project" value="UniProtKB-KW"/>
</dbReference>
<dbReference type="GO" id="GO:0019843">
    <property type="term" value="F:rRNA binding"/>
    <property type="evidence" value="ECO:0007669"/>
    <property type="project" value="UniProtKB-UniRule"/>
</dbReference>
<dbReference type="GO" id="GO:0003735">
    <property type="term" value="F:structural constituent of ribosome"/>
    <property type="evidence" value="ECO:0007669"/>
    <property type="project" value="InterPro"/>
</dbReference>
<dbReference type="GO" id="GO:0006412">
    <property type="term" value="P:translation"/>
    <property type="evidence" value="ECO:0007669"/>
    <property type="project" value="UniProtKB-UniRule"/>
</dbReference>
<dbReference type="FunFam" id="3.40.5.10:FF:000002">
    <property type="entry name" value="50S ribosomal protein L9"/>
    <property type="match status" value="1"/>
</dbReference>
<dbReference type="Gene3D" id="3.10.430.100">
    <property type="entry name" value="Ribosomal protein L9, C-terminal domain"/>
    <property type="match status" value="1"/>
</dbReference>
<dbReference type="Gene3D" id="3.40.5.10">
    <property type="entry name" value="Ribosomal protein L9, N-terminal domain"/>
    <property type="match status" value="1"/>
</dbReference>
<dbReference type="HAMAP" id="MF_00503">
    <property type="entry name" value="Ribosomal_bL9"/>
    <property type="match status" value="1"/>
</dbReference>
<dbReference type="InterPro" id="IPR000244">
    <property type="entry name" value="Ribosomal_bL9"/>
</dbReference>
<dbReference type="InterPro" id="IPR009027">
    <property type="entry name" value="Ribosomal_bL9/RNase_H1_N"/>
</dbReference>
<dbReference type="InterPro" id="IPR020594">
    <property type="entry name" value="Ribosomal_bL9_bac/chp"/>
</dbReference>
<dbReference type="InterPro" id="IPR020069">
    <property type="entry name" value="Ribosomal_bL9_C"/>
</dbReference>
<dbReference type="InterPro" id="IPR036791">
    <property type="entry name" value="Ribosomal_bL9_C_sf"/>
</dbReference>
<dbReference type="InterPro" id="IPR020070">
    <property type="entry name" value="Ribosomal_bL9_N"/>
</dbReference>
<dbReference type="InterPro" id="IPR036935">
    <property type="entry name" value="Ribosomal_bL9_N_sf"/>
</dbReference>
<dbReference type="NCBIfam" id="TIGR00158">
    <property type="entry name" value="L9"/>
    <property type="match status" value="1"/>
</dbReference>
<dbReference type="PANTHER" id="PTHR21368">
    <property type="entry name" value="50S RIBOSOMAL PROTEIN L9"/>
    <property type="match status" value="1"/>
</dbReference>
<dbReference type="Pfam" id="PF03948">
    <property type="entry name" value="Ribosomal_L9_C"/>
    <property type="match status" value="1"/>
</dbReference>
<dbReference type="Pfam" id="PF01281">
    <property type="entry name" value="Ribosomal_L9_N"/>
    <property type="match status" value="1"/>
</dbReference>
<dbReference type="SUPFAM" id="SSF55658">
    <property type="entry name" value="L9 N-domain-like"/>
    <property type="match status" value="1"/>
</dbReference>
<dbReference type="SUPFAM" id="SSF55653">
    <property type="entry name" value="Ribosomal protein L9 C-domain"/>
    <property type="match status" value="1"/>
</dbReference>
<dbReference type="PROSITE" id="PS00651">
    <property type="entry name" value="RIBOSOMAL_L9"/>
    <property type="match status" value="1"/>
</dbReference>
<sequence length="148" mass="16423">MKVILLQDVKKLGKKGDVINASDGYARNFLFPKKLAQEATDNNLHILNNKKENERRQKLAELEAAQALAADLKDKVIKIDGKAGDNGKLFGAITSKDVAGLIKKQFNVEVDKKKIVMDTIKIAGTYNIEVKLYPEVSTKMKVMVVPVQ</sequence>
<organism>
    <name type="scientific">Clostridium perfringens (strain ATCC 13124 / DSM 756 / JCM 1290 / NCIMB 6125 / NCTC 8237 / Type A)</name>
    <dbReference type="NCBI Taxonomy" id="195103"/>
    <lineage>
        <taxon>Bacteria</taxon>
        <taxon>Bacillati</taxon>
        <taxon>Bacillota</taxon>
        <taxon>Clostridia</taxon>
        <taxon>Eubacteriales</taxon>
        <taxon>Clostridiaceae</taxon>
        <taxon>Clostridium</taxon>
    </lineage>
</organism>
<feature type="chain" id="PRO_0000258449" description="Large ribosomal subunit protein bL9">
    <location>
        <begin position="1"/>
        <end position="148"/>
    </location>
</feature>